<protein>
    <recommendedName>
        <fullName evidence="1">Transcriptional repressor NrdR</fullName>
    </recommendedName>
</protein>
<keyword id="KW-0067">ATP-binding</keyword>
<keyword id="KW-0238">DNA-binding</keyword>
<keyword id="KW-0479">Metal-binding</keyword>
<keyword id="KW-0547">Nucleotide-binding</keyword>
<keyword id="KW-0678">Repressor</keyword>
<keyword id="KW-0804">Transcription</keyword>
<keyword id="KW-0805">Transcription regulation</keyword>
<keyword id="KW-0862">Zinc</keyword>
<keyword id="KW-0863">Zinc-finger</keyword>
<name>NRDR_BURVG</name>
<proteinExistence type="inferred from homology"/>
<feature type="chain" id="PRO_1000080727" description="Transcriptional repressor NrdR">
    <location>
        <begin position="1"/>
        <end position="159"/>
    </location>
</feature>
<feature type="domain" description="ATP-cone" evidence="1">
    <location>
        <begin position="49"/>
        <end position="139"/>
    </location>
</feature>
<feature type="zinc finger region" evidence="1">
    <location>
        <begin position="3"/>
        <end position="34"/>
    </location>
</feature>
<evidence type="ECO:0000255" key="1">
    <source>
        <dbReference type="HAMAP-Rule" id="MF_00440"/>
    </source>
</evidence>
<reference key="1">
    <citation type="submission" date="2007-03" db="EMBL/GenBank/DDBJ databases">
        <title>Complete sequence of chromosome 1 of Burkholderia vietnamiensis G4.</title>
        <authorList>
            <consortium name="US DOE Joint Genome Institute"/>
            <person name="Copeland A."/>
            <person name="Lucas S."/>
            <person name="Lapidus A."/>
            <person name="Barry K."/>
            <person name="Detter J.C."/>
            <person name="Glavina del Rio T."/>
            <person name="Hammon N."/>
            <person name="Israni S."/>
            <person name="Dalin E."/>
            <person name="Tice H."/>
            <person name="Pitluck S."/>
            <person name="Chain P."/>
            <person name="Malfatti S."/>
            <person name="Shin M."/>
            <person name="Vergez L."/>
            <person name="Schmutz J."/>
            <person name="Larimer F."/>
            <person name="Land M."/>
            <person name="Hauser L."/>
            <person name="Kyrpides N."/>
            <person name="Tiedje J."/>
            <person name="Richardson P."/>
        </authorList>
    </citation>
    <scope>NUCLEOTIDE SEQUENCE [LARGE SCALE GENOMIC DNA]</scope>
    <source>
        <strain>G4 / LMG 22486</strain>
    </source>
</reference>
<sequence length="159" mass="18397">MRCPFCRHEDTQVVDSRVSEDGAAIRRRRRCSACDKRFTTYERVELNLPAVVKKDGSRTEFDRRKIVASMQLALRKRPVAADAIDAAVARIEYQLLATGEREVRSEKLGELVMNELRGLDTIAYVRFASVYRRFEDVSEFADVIEEFRRASPSKPPRKR</sequence>
<comment type="function">
    <text evidence="1">Negatively regulates transcription of bacterial ribonucleotide reductase nrd genes and operons by binding to NrdR-boxes.</text>
</comment>
<comment type="cofactor">
    <cofactor evidence="1">
        <name>Zn(2+)</name>
        <dbReference type="ChEBI" id="CHEBI:29105"/>
    </cofactor>
    <text evidence="1">Binds 1 zinc ion.</text>
</comment>
<comment type="similarity">
    <text evidence="1">Belongs to the NrdR family.</text>
</comment>
<accession>A4JBU8</accession>
<gene>
    <name evidence="1" type="primary">nrdR</name>
    <name type="ordered locus">Bcep1808_0739</name>
</gene>
<organism>
    <name type="scientific">Burkholderia vietnamiensis (strain G4 / LMG 22486)</name>
    <name type="common">Burkholderia cepacia (strain R1808)</name>
    <dbReference type="NCBI Taxonomy" id="269482"/>
    <lineage>
        <taxon>Bacteria</taxon>
        <taxon>Pseudomonadati</taxon>
        <taxon>Pseudomonadota</taxon>
        <taxon>Betaproteobacteria</taxon>
        <taxon>Burkholderiales</taxon>
        <taxon>Burkholderiaceae</taxon>
        <taxon>Burkholderia</taxon>
        <taxon>Burkholderia cepacia complex</taxon>
    </lineage>
</organism>
<dbReference type="EMBL" id="CP000614">
    <property type="protein sequence ID" value="ABO53751.1"/>
    <property type="molecule type" value="Genomic_DNA"/>
</dbReference>
<dbReference type="SMR" id="A4JBU8"/>
<dbReference type="KEGG" id="bvi:Bcep1808_0739"/>
<dbReference type="eggNOG" id="COG1327">
    <property type="taxonomic scope" value="Bacteria"/>
</dbReference>
<dbReference type="HOGENOM" id="CLU_108412_0_0_4"/>
<dbReference type="Proteomes" id="UP000002287">
    <property type="component" value="Chromosome 1"/>
</dbReference>
<dbReference type="GO" id="GO:0005524">
    <property type="term" value="F:ATP binding"/>
    <property type="evidence" value="ECO:0007669"/>
    <property type="project" value="UniProtKB-KW"/>
</dbReference>
<dbReference type="GO" id="GO:0003677">
    <property type="term" value="F:DNA binding"/>
    <property type="evidence" value="ECO:0007669"/>
    <property type="project" value="UniProtKB-KW"/>
</dbReference>
<dbReference type="GO" id="GO:0008270">
    <property type="term" value="F:zinc ion binding"/>
    <property type="evidence" value="ECO:0007669"/>
    <property type="project" value="UniProtKB-UniRule"/>
</dbReference>
<dbReference type="GO" id="GO:0045892">
    <property type="term" value="P:negative regulation of DNA-templated transcription"/>
    <property type="evidence" value="ECO:0007669"/>
    <property type="project" value="UniProtKB-UniRule"/>
</dbReference>
<dbReference type="HAMAP" id="MF_00440">
    <property type="entry name" value="NrdR"/>
    <property type="match status" value="1"/>
</dbReference>
<dbReference type="InterPro" id="IPR005144">
    <property type="entry name" value="ATP-cone_dom"/>
</dbReference>
<dbReference type="InterPro" id="IPR055173">
    <property type="entry name" value="NrdR-like_N"/>
</dbReference>
<dbReference type="InterPro" id="IPR003796">
    <property type="entry name" value="RNR_NrdR-like"/>
</dbReference>
<dbReference type="NCBIfam" id="TIGR00244">
    <property type="entry name" value="transcriptional regulator NrdR"/>
    <property type="match status" value="1"/>
</dbReference>
<dbReference type="PANTHER" id="PTHR30455">
    <property type="entry name" value="TRANSCRIPTIONAL REPRESSOR NRDR"/>
    <property type="match status" value="1"/>
</dbReference>
<dbReference type="PANTHER" id="PTHR30455:SF2">
    <property type="entry name" value="TRANSCRIPTIONAL REPRESSOR NRDR"/>
    <property type="match status" value="1"/>
</dbReference>
<dbReference type="Pfam" id="PF03477">
    <property type="entry name" value="ATP-cone"/>
    <property type="match status" value="1"/>
</dbReference>
<dbReference type="Pfam" id="PF22811">
    <property type="entry name" value="Zn_ribbon_NrdR"/>
    <property type="match status" value="1"/>
</dbReference>
<dbReference type="PROSITE" id="PS51161">
    <property type="entry name" value="ATP_CONE"/>
    <property type="match status" value="1"/>
</dbReference>